<dbReference type="EMBL" id="AY634300">
    <property type="protein sequence ID" value="AAW02906.1"/>
    <property type="molecule type" value="Genomic_DNA"/>
</dbReference>
<dbReference type="EMBL" id="HE601100">
    <property type="protein sequence ID" value="CAP28213.3"/>
    <property type="molecule type" value="Genomic_DNA"/>
</dbReference>
<dbReference type="SMR" id="Q61MQ8"/>
<dbReference type="FunCoup" id="Q61MQ8">
    <property type="interactions" value="344"/>
</dbReference>
<dbReference type="STRING" id="6238.Q61MQ8"/>
<dbReference type="EnsemblMetazoa" id="CBG08377.1">
    <property type="protein sequence ID" value="CBG08377.1"/>
    <property type="gene ID" value="WBGene00030180"/>
</dbReference>
<dbReference type="KEGG" id="cbr:CBG_08377"/>
<dbReference type="CTD" id="8576565"/>
<dbReference type="WormBase" id="CBG08377">
    <property type="protein sequence ID" value="CBP02048"/>
    <property type="gene ID" value="WBGene00030180"/>
    <property type="gene designation" value="Cbr-gpa-7"/>
</dbReference>
<dbReference type="eggNOG" id="KOG0082">
    <property type="taxonomic scope" value="Eukaryota"/>
</dbReference>
<dbReference type="HOGENOM" id="CLU_014184_6_0_1"/>
<dbReference type="InParanoid" id="Q61MQ8"/>
<dbReference type="OMA" id="QIEYEDP"/>
<dbReference type="OrthoDB" id="5817230at2759"/>
<dbReference type="Proteomes" id="UP000008549">
    <property type="component" value="Unassembled WGS sequence"/>
</dbReference>
<dbReference type="GO" id="GO:0005737">
    <property type="term" value="C:cytoplasm"/>
    <property type="evidence" value="ECO:0000318"/>
    <property type="project" value="GO_Central"/>
</dbReference>
<dbReference type="GO" id="GO:0005829">
    <property type="term" value="C:cytosol"/>
    <property type="evidence" value="ECO:0007669"/>
    <property type="project" value="EnsemblMetazoa"/>
</dbReference>
<dbReference type="GO" id="GO:0005834">
    <property type="term" value="C:heterotrimeric G-protein complex"/>
    <property type="evidence" value="ECO:0000318"/>
    <property type="project" value="GO_Central"/>
</dbReference>
<dbReference type="GO" id="GO:0005634">
    <property type="term" value="C:nucleus"/>
    <property type="evidence" value="ECO:0007669"/>
    <property type="project" value="EnsemblMetazoa"/>
</dbReference>
<dbReference type="GO" id="GO:0001664">
    <property type="term" value="F:G protein-coupled receptor binding"/>
    <property type="evidence" value="ECO:0000318"/>
    <property type="project" value="GO_Central"/>
</dbReference>
<dbReference type="GO" id="GO:0031683">
    <property type="term" value="F:G-protein beta/gamma-subunit complex binding"/>
    <property type="evidence" value="ECO:0000318"/>
    <property type="project" value="GO_Central"/>
</dbReference>
<dbReference type="GO" id="GO:0005525">
    <property type="term" value="F:GTP binding"/>
    <property type="evidence" value="ECO:0007669"/>
    <property type="project" value="UniProtKB-KW"/>
</dbReference>
<dbReference type="GO" id="GO:0003924">
    <property type="term" value="F:GTPase activity"/>
    <property type="evidence" value="ECO:0000318"/>
    <property type="project" value="GO_Central"/>
</dbReference>
<dbReference type="GO" id="GO:0046872">
    <property type="term" value="F:metal ion binding"/>
    <property type="evidence" value="ECO:0007669"/>
    <property type="project" value="UniProtKB-KW"/>
</dbReference>
<dbReference type="GO" id="GO:0007188">
    <property type="term" value="P:adenylate cyclase-modulating G protein-coupled receptor signaling pathway"/>
    <property type="evidence" value="ECO:0000318"/>
    <property type="project" value="GO_Central"/>
</dbReference>
<dbReference type="CDD" id="cd00066">
    <property type="entry name" value="G-alpha"/>
    <property type="match status" value="1"/>
</dbReference>
<dbReference type="FunFam" id="1.10.400.10:FF:000016">
    <property type="entry name" value="Guanine nucleotide-binding protein alpha-7 subunit"/>
    <property type="match status" value="1"/>
</dbReference>
<dbReference type="FunFam" id="3.40.50.300:FF:000041">
    <property type="entry name" value="Guanine nucleotide-binding protein G(I) subunit alpha"/>
    <property type="match status" value="1"/>
</dbReference>
<dbReference type="FunFam" id="3.40.50.300:FF:000692">
    <property type="entry name" value="Guanine nucleotide-binding protein subunit alpha"/>
    <property type="match status" value="1"/>
</dbReference>
<dbReference type="Gene3D" id="1.10.400.10">
    <property type="entry name" value="GI Alpha 1, domain 2-like"/>
    <property type="match status" value="1"/>
</dbReference>
<dbReference type="Gene3D" id="3.40.50.300">
    <property type="entry name" value="P-loop containing nucleotide triphosphate hydrolases"/>
    <property type="match status" value="1"/>
</dbReference>
<dbReference type="InterPro" id="IPR001408">
    <property type="entry name" value="Gprotein_alpha_I"/>
</dbReference>
<dbReference type="InterPro" id="IPR001019">
    <property type="entry name" value="Gprotein_alpha_su"/>
</dbReference>
<dbReference type="InterPro" id="IPR011025">
    <property type="entry name" value="GproteinA_insert"/>
</dbReference>
<dbReference type="InterPro" id="IPR027417">
    <property type="entry name" value="P-loop_NTPase"/>
</dbReference>
<dbReference type="PANTHER" id="PTHR10218">
    <property type="entry name" value="GTP-BINDING PROTEIN ALPHA SUBUNIT"/>
    <property type="match status" value="1"/>
</dbReference>
<dbReference type="PANTHER" id="PTHR10218:SF243">
    <property type="entry name" value="GUANINE NUCLEOTIDE-BINDING PROTEIN ALPHA-7 SUBUNIT"/>
    <property type="match status" value="1"/>
</dbReference>
<dbReference type="Pfam" id="PF00503">
    <property type="entry name" value="G-alpha"/>
    <property type="match status" value="1"/>
</dbReference>
<dbReference type="PRINTS" id="PR00318">
    <property type="entry name" value="GPROTEINA"/>
</dbReference>
<dbReference type="PRINTS" id="PR00441">
    <property type="entry name" value="GPROTEINAI"/>
</dbReference>
<dbReference type="SMART" id="SM00275">
    <property type="entry name" value="G_alpha"/>
    <property type="match status" value="1"/>
</dbReference>
<dbReference type="SUPFAM" id="SSF52540">
    <property type="entry name" value="P-loop containing nucleoside triphosphate hydrolases"/>
    <property type="match status" value="1"/>
</dbReference>
<dbReference type="SUPFAM" id="SSF47895">
    <property type="entry name" value="Transducin (alpha subunit), insertion domain"/>
    <property type="match status" value="1"/>
</dbReference>
<dbReference type="PROSITE" id="PS51882">
    <property type="entry name" value="G_ALPHA"/>
    <property type="match status" value="1"/>
</dbReference>
<sequence>MGHCTSKDQKEGKRLNRRIDEQIKKDQSMSLRIIKLLLLGAGESGKSTILKQMRILHKDGFSQQDLEMIRPVVYSNCIHSMLSILRAMFHLQIEYGEPDRVRDSQLVFATVHANKEELTEELAQAMQRLWHDPGVRECYRRSNEYQIDDSAKYFLDNLPRLSSPSYVPSEQDLLRTRIKTTGITEVLFELKGLTFRVIDVGGQRSERKKWIHCFDNVNAIIFISSLSEYDQTLREDNCTNRMQESLKLFDSICNSPWFADIHFILFLNKKDLFAEKIVRSPLTVCFPEYKGQQNQTECINYIQWKFEQLNRSSQREIYCHHTCATDTNNVQFVLDACLDMIIAKNLKSMGLC</sequence>
<accession>Q61MQ8</accession>
<accession>A8X6F2</accession>
<keyword id="KW-0342">GTP-binding</keyword>
<keyword id="KW-0449">Lipoprotein</keyword>
<keyword id="KW-0460">Magnesium</keyword>
<keyword id="KW-0479">Metal-binding</keyword>
<keyword id="KW-0519">Myristate</keyword>
<keyword id="KW-0547">Nucleotide-binding</keyword>
<keyword id="KW-0564">Palmitate</keyword>
<keyword id="KW-1185">Reference proteome</keyword>
<keyword id="KW-0807">Transducer</keyword>
<gene>
    <name type="primary">gpa-7</name>
    <name type="ORF">CBG08377</name>
</gene>
<proteinExistence type="inferred from homology"/>
<protein>
    <recommendedName>
        <fullName>Guanine nucleotide-binding protein alpha-7 subunit</fullName>
    </recommendedName>
</protein>
<feature type="initiator methionine" description="Removed" evidence="2">
    <location>
        <position position="1"/>
    </location>
</feature>
<feature type="chain" id="PRO_0000203640" description="Guanine nucleotide-binding protein alpha-7 subunit">
    <location>
        <begin position="2"/>
        <end position="352"/>
    </location>
</feature>
<feature type="domain" description="G-alpha" evidence="3">
    <location>
        <begin position="32"/>
        <end position="352"/>
    </location>
</feature>
<feature type="region of interest" description="G1 motif" evidence="3">
    <location>
        <begin position="35"/>
        <end position="48"/>
    </location>
</feature>
<feature type="region of interest" description="G2 motif" evidence="3">
    <location>
        <begin position="172"/>
        <end position="180"/>
    </location>
</feature>
<feature type="region of interest" description="G3 motif" evidence="3">
    <location>
        <begin position="195"/>
        <end position="204"/>
    </location>
</feature>
<feature type="region of interest" description="G4 motif" evidence="3">
    <location>
        <begin position="264"/>
        <end position="271"/>
    </location>
</feature>
<feature type="region of interest" description="G5 motif" evidence="3">
    <location>
        <begin position="322"/>
        <end position="327"/>
    </location>
</feature>
<feature type="binding site" evidence="1">
    <location>
        <begin position="40"/>
        <end position="47"/>
    </location>
    <ligand>
        <name>GTP</name>
        <dbReference type="ChEBI" id="CHEBI:37565"/>
    </ligand>
</feature>
<feature type="binding site" evidence="1">
    <location>
        <position position="47"/>
    </location>
    <ligand>
        <name>Mg(2+)</name>
        <dbReference type="ChEBI" id="CHEBI:18420"/>
    </ligand>
</feature>
<feature type="binding site" evidence="1">
    <location>
        <begin position="174"/>
        <end position="180"/>
    </location>
    <ligand>
        <name>GTP</name>
        <dbReference type="ChEBI" id="CHEBI:37565"/>
    </ligand>
</feature>
<feature type="binding site" evidence="1">
    <location>
        <position position="180"/>
    </location>
    <ligand>
        <name>Mg(2+)</name>
        <dbReference type="ChEBI" id="CHEBI:18420"/>
    </ligand>
</feature>
<feature type="binding site" evidence="1">
    <location>
        <begin position="199"/>
        <end position="203"/>
    </location>
    <ligand>
        <name>GTP</name>
        <dbReference type="ChEBI" id="CHEBI:37565"/>
    </ligand>
</feature>
<feature type="binding site" evidence="1">
    <location>
        <begin position="268"/>
        <end position="271"/>
    </location>
    <ligand>
        <name>GTP</name>
        <dbReference type="ChEBI" id="CHEBI:37565"/>
    </ligand>
</feature>
<feature type="binding site" evidence="1">
    <location>
        <position position="324"/>
    </location>
    <ligand>
        <name>GTP</name>
        <dbReference type="ChEBI" id="CHEBI:37565"/>
    </ligand>
</feature>
<feature type="lipid moiety-binding region" description="N-myristoyl glycine" evidence="2">
    <location>
        <position position="2"/>
    </location>
</feature>
<feature type="lipid moiety-binding region" description="S-palmitoyl cysteine" evidence="2">
    <location>
        <position position="4"/>
    </location>
</feature>
<comment type="function">
    <text>Guanine nucleotide-binding proteins (G proteins) are involved as modulators or transducers in various transmembrane signaling systems.</text>
</comment>
<comment type="subunit">
    <text>G proteins are composed of 3 units; alpha, beta and gamma. The alpha chain contains the guanine nucleotide binding site.</text>
</comment>
<comment type="similarity">
    <text evidence="4">Belongs to the G-alpha family. G(i/o/t/z) subfamily.</text>
</comment>
<reference key="1">
    <citation type="journal article" date="2005" name="Mol. Genet. Genomics">
        <title>Functional constraint and divergence in the G protein family in Caenorhabditis elegans and Caenorhabditis briggsae.</title>
        <authorList>
            <person name="Jovelin R."/>
            <person name="Phillips P.C."/>
        </authorList>
    </citation>
    <scope>NUCLEOTIDE SEQUENCE [GENOMIC DNA]</scope>
    <source>
        <strain>AF16</strain>
    </source>
</reference>
<reference key="2">
    <citation type="journal article" date="2003" name="PLoS Biol.">
        <title>The genome sequence of Caenorhabditis briggsae: a platform for comparative genomics.</title>
        <authorList>
            <person name="Stein L.D."/>
            <person name="Bao Z."/>
            <person name="Blasiar D."/>
            <person name="Blumenthal T."/>
            <person name="Brent M.R."/>
            <person name="Chen N."/>
            <person name="Chinwalla A."/>
            <person name="Clarke L."/>
            <person name="Clee C."/>
            <person name="Coghlan A."/>
            <person name="Coulson A."/>
            <person name="D'Eustachio P."/>
            <person name="Fitch D.H.A."/>
            <person name="Fulton L.A."/>
            <person name="Fulton R.E."/>
            <person name="Griffiths-Jones S."/>
            <person name="Harris T.W."/>
            <person name="Hillier L.W."/>
            <person name="Kamath R."/>
            <person name="Kuwabara P.E."/>
            <person name="Mardis E.R."/>
            <person name="Marra M.A."/>
            <person name="Miner T.L."/>
            <person name="Minx P."/>
            <person name="Mullikin J.C."/>
            <person name="Plumb R.W."/>
            <person name="Rogers J."/>
            <person name="Schein J.E."/>
            <person name="Sohrmann M."/>
            <person name="Spieth J."/>
            <person name="Stajich J.E."/>
            <person name="Wei C."/>
            <person name="Willey D."/>
            <person name="Wilson R.K."/>
            <person name="Durbin R.M."/>
            <person name="Waterston R.H."/>
        </authorList>
    </citation>
    <scope>NUCLEOTIDE SEQUENCE [LARGE SCALE GENOMIC DNA]</scope>
    <source>
        <strain>AF16</strain>
    </source>
</reference>
<name>GPA7_CAEBR</name>
<organism>
    <name type="scientific">Caenorhabditis briggsae</name>
    <dbReference type="NCBI Taxonomy" id="6238"/>
    <lineage>
        <taxon>Eukaryota</taxon>
        <taxon>Metazoa</taxon>
        <taxon>Ecdysozoa</taxon>
        <taxon>Nematoda</taxon>
        <taxon>Chromadorea</taxon>
        <taxon>Rhabditida</taxon>
        <taxon>Rhabditina</taxon>
        <taxon>Rhabditomorpha</taxon>
        <taxon>Rhabditoidea</taxon>
        <taxon>Rhabditidae</taxon>
        <taxon>Peloderinae</taxon>
        <taxon>Caenorhabditis</taxon>
    </lineage>
</organism>
<evidence type="ECO:0000250" key="1"/>
<evidence type="ECO:0000255" key="2"/>
<evidence type="ECO:0000255" key="3">
    <source>
        <dbReference type="PROSITE-ProRule" id="PRU01230"/>
    </source>
</evidence>
<evidence type="ECO:0000305" key="4"/>